<name>TOX4_BORPA</name>
<reference key="1">
    <citation type="journal article" date="2003" name="Nat. Genet.">
        <title>Comparative analysis of the genome sequences of Bordetella pertussis, Bordetella parapertussis and Bordetella bronchiseptica.</title>
        <authorList>
            <person name="Parkhill J."/>
            <person name="Sebaihia M."/>
            <person name="Preston A."/>
            <person name="Murphy L.D."/>
            <person name="Thomson N.R."/>
            <person name="Harris D.E."/>
            <person name="Holden M.T.G."/>
            <person name="Churcher C.M."/>
            <person name="Bentley S.D."/>
            <person name="Mungall K.L."/>
            <person name="Cerdeno-Tarraga A.-M."/>
            <person name="Temple L."/>
            <person name="James K.D."/>
            <person name="Harris B."/>
            <person name="Quail M.A."/>
            <person name="Achtman M."/>
            <person name="Atkin R."/>
            <person name="Baker S."/>
            <person name="Basham D."/>
            <person name="Bason N."/>
            <person name="Cherevach I."/>
            <person name="Chillingworth T."/>
            <person name="Collins M."/>
            <person name="Cronin A."/>
            <person name="Davis P."/>
            <person name="Doggett J."/>
            <person name="Feltwell T."/>
            <person name="Goble A."/>
            <person name="Hamlin N."/>
            <person name="Hauser H."/>
            <person name="Holroyd S."/>
            <person name="Jagels K."/>
            <person name="Leather S."/>
            <person name="Moule S."/>
            <person name="Norberczak H."/>
            <person name="O'Neil S."/>
            <person name="Ormond D."/>
            <person name="Price C."/>
            <person name="Rabbinowitsch E."/>
            <person name="Rutter S."/>
            <person name="Sanders M."/>
            <person name="Saunders D."/>
            <person name="Seeger K."/>
            <person name="Sharp S."/>
            <person name="Simmonds M."/>
            <person name="Skelton J."/>
            <person name="Squares R."/>
            <person name="Squares S."/>
            <person name="Stevens K."/>
            <person name="Unwin L."/>
            <person name="Whitehead S."/>
            <person name="Barrell B.G."/>
            <person name="Maskell D.J."/>
        </authorList>
    </citation>
    <scope>NUCLEOTIDE SEQUENCE [LARGE SCALE GENOMIC DNA]</scope>
    <source>
        <strain>12822 / ATCC BAA-587 / NCTC 13253</strain>
    </source>
</reference>
<keyword id="KW-1015">Disulfide bond</keyword>
<keyword id="KW-1032">Host cell membrane</keyword>
<keyword id="KW-1043">Host membrane</keyword>
<keyword id="KW-0472">Membrane</keyword>
<keyword id="KW-0964">Secreted</keyword>
<keyword id="KW-0732">Signal</keyword>
<keyword id="KW-0800">Toxin</keyword>
<keyword id="KW-0843">Virulence</keyword>
<keyword id="KW-0855">Whooping cough</keyword>
<gene>
    <name type="primary">ptxD</name>
    <name type="ordered locus">BPP4306</name>
</gene>
<proteinExistence type="inferred from homology"/>
<comment type="function">
    <text evidence="1">PTX oligomer B binds to receptors on the eukaryotic cell surface and facilitates the translocation of the toxic subunit across the cell membrane.</text>
</comment>
<comment type="subunit">
    <text evidence="1">Pertussis toxin contains five different chains, S1-S5. They are organized into 2 functional subunits: A, composed of S1 (which is toxic) and B, containing S2, S3, S5, and two copies of S4 (B binds to the membrane receptors). Dimers of S2-S4 and S3-S4 are held together by S5 (By similarity).</text>
</comment>
<comment type="subcellular location">
    <subcellularLocation>
        <location>Secreted</location>
    </subcellularLocation>
    <subcellularLocation>
        <location evidence="2">Host cell membrane</location>
    </subcellularLocation>
</comment>
<organism>
    <name type="scientific">Bordetella parapertussis (strain 12822 / ATCC BAA-587 / NCTC 13253)</name>
    <dbReference type="NCBI Taxonomy" id="257311"/>
    <lineage>
        <taxon>Bacteria</taxon>
        <taxon>Pseudomonadati</taxon>
        <taxon>Pseudomonadota</taxon>
        <taxon>Betaproteobacteria</taxon>
        <taxon>Burkholderiales</taxon>
        <taxon>Alcaligenaceae</taxon>
        <taxon>Bordetella</taxon>
    </lineage>
</organism>
<evidence type="ECO:0000250" key="1"/>
<evidence type="ECO:0000305" key="2"/>
<dbReference type="EMBL" id="BX640436">
    <property type="protein sequence ID" value="CAE39584.1"/>
    <property type="molecule type" value="Genomic_DNA"/>
</dbReference>
<dbReference type="RefSeq" id="WP_010929491.1">
    <property type="nucleotide sequence ID" value="NC_002928.3"/>
</dbReference>
<dbReference type="SMR" id="P0A3R6"/>
<dbReference type="GeneID" id="69599990"/>
<dbReference type="GeneID" id="93206104"/>
<dbReference type="KEGG" id="bpa:BPP4306"/>
<dbReference type="HOGENOM" id="CLU_1718794_0_0_4"/>
<dbReference type="Proteomes" id="UP000001421">
    <property type="component" value="Chromosome"/>
</dbReference>
<dbReference type="GO" id="GO:0005576">
    <property type="term" value="C:extracellular region"/>
    <property type="evidence" value="ECO:0007669"/>
    <property type="project" value="UniProtKB-SubCell"/>
</dbReference>
<dbReference type="GO" id="GO:0020002">
    <property type="term" value="C:host cell plasma membrane"/>
    <property type="evidence" value="ECO:0007669"/>
    <property type="project" value="UniProtKB-SubCell"/>
</dbReference>
<dbReference type="GO" id="GO:0016020">
    <property type="term" value="C:membrane"/>
    <property type="evidence" value="ECO:0007669"/>
    <property type="project" value="UniProtKB-KW"/>
</dbReference>
<dbReference type="GO" id="GO:0090729">
    <property type="term" value="F:toxin activity"/>
    <property type="evidence" value="ECO:0007669"/>
    <property type="project" value="UniProtKB-KW"/>
</dbReference>
<dbReference type="Gene3D" id="2.40.50.110">
    <property type="match status" value="1"/>
</dbReference>
<dbReference type="InterPro" id="IPR008992">
    <property type="entry name" value="Enterotoxin"/>
</dbReference>
<dbReference type="InterPro" id="IPR015355">
    <property type="entry name" value="Pertussis_toxin_subS4"/>
</dbReference>
<dbReference type="Pfam" id="PF09275">
    <property type="entry name" value="Pertus-S4-tox"/>
    <property type="match status" value="1"/>
</dbReference>
<dbReference type="SUPFAM" id="SSF50203">
    <property type="entry name" value="Bacterial enterotoxins"/>
    <property type="match status" value="1"/>
</dbReference>
<accession>P0A3R6</accession>
<accession>P04980</accession>
<sequence>MLRRFPTRTTAPGQGGARRSRVRALAWLLASGAMTHLSPALADVPYVLVKTNMVVTSVAMKPYEVTPTRMLVCGIAAKLGAAASSPDAHVPFCFGKDLKRPGSSPMEVMLRAVFMQQRPLRMFLGPKQLTFEGKPALELIRMVECSGKQDCP</sequence>
<feature type="signal peptide" evidence="1">
    <location>
        <begin position="1"/>
        <end position="42"/>
    </location>
</feature>
<feature type="chain" id="PRO_0000019363" description="Pertussis toxin subunit 4">
    <location>
        <begin position="43"/>
        <end position="152"/>
    </location>
</feature>
<feature type="disulfide bond" evidence="1">
    <location>
        <begin position="73"/>
        <end position="93"/>
    </location>
</feature>
<feature type="disulfide bond" evidence="1">
    <location>
        <begin position="145"/>
        <end position="151"/>
    </location>
</feature>
<protein>
    <recommendedName>
        <fullName>Pertussis toxin subunit 4</fullName>
        <shortName>PTX S4</shortName>
    </recommendedName>
    <alternativeName>
        <fullName>Islet-activating protein S4</fullName>
        <shortName>IAP S4</shortName>
    </alternativeName>
</protein>